<keyword id="KW-0931">ER-Golgi transport</keyword>
<keyword id="KW-0333">Golgi apparatus</keyword>
<keyword id="KW-0342">GTP-binding</keyword>
<keyword id="KW-0378">Hydrolase</keyword>
<keyword id="KW-0449">Lipoprotein</keyword>
<keyword id="KW-0472">Membrane</keyword>
<keyword id="KW-0519">Myristate</keyword>
<keyword id="KW-0547">Nucleotide-binding</keyword>
<keyword id="KW-0653">Protein transport</keyword>
<keyword id="KW-0813">Transport</keyword>
<comment type="function">
    <text evidence="1">Small GTPase involved in protein trafficking between different compartments. Modulates vesicle budding and uncoating within the Golgi complex. In its GTP-bound form, triggers the recruitment of coatomer proteins to the Golgi membrane. The hydrolysis of ARF1-bound GTP, which is mediated by ARFGAPs proteins, is required for dissociation of coat proteins from Golgi membranes and vesicles.</text>
</comment>
<comment type="catalytic activity">
    <reaction evidence="1">
        <text>GTP + H2O = GDP + phosphate + H(+)</text>
        <dbReference type="Rhea" id="RHEA:19669"/>
        <dbReference type="ChEBI" id="CHEBI:15377"/>
        <dbReference type="ChEBI" id="CHEBI:15378"/>
        <dbReference type="ChEBI" id="CHEBI:37565"/>
        <dbReference type="ChEBI" id="CHEBI:43474"/>
        <dbReference type="ChEBI" id="CHEBI:58189"/>
        <dbReference type="EC" id="3.6.5.2"/>
    </reaction>
</comment>
<comment type="activity regulation">
    <text evidence="1">Alternates between an inactive GDP-bound form and an active GTP-bound form (By similarity). Activated by a guanine nucleotide-exchange factor (GEF) and inactivated by GTPase-activating protein (GAP) (By similarity).</text>
</comment>
<comment type="subcellular location">
    <subcellularLocation>
        <location evidence="1">Golgi apparatus membrane</location>
        <topology evidence="1">Lipid-anchor</topology>
        <orientation evidence="4">Cytoplasmic side</orientation>
    </subcellularLocation>
    <text evidence="2">In the GDP-bound form, associates transiently with the membranes via its myristoylated N-terminus where guanine nucleotide-exchange factor (GEF)-mediated nucleotide exchange occurs (By similarity). Following nucleotide exchange, the GTP-bound form undergoes a conformational change, leading to the exposure of a myristoylated N-terminal amphipathic helix that provides stable membrane anchorage (By similarity).</text>
</comment>
<comment type="similarity">
    <text evidence="4">Belongs to the small GTPase superfamily. Arf family.</text>
</comment>
<evidence type="ECO:0000250" key="1">
    <source>
        <dbReference type="UniProtKB" id="P84077"/>
    </source>
</evidence>
<evidence type="ECO:0000250" key="2">
    <source>
        <dbReference type="UniProtKB" id="P84080"/>
    </source>
</evidence>
<evidence type="ECO:0000255" key="3"/>
<evidence type="ECO:0000305" key="4"/>
<organism>
    <name type="scientific">Locusta migratoria</name>
    <name type="common">Migratory locust</name>
    <dbReference type="NCBI Taxonomy" id="7004"/>
    <lineage>
        <taxon>Eukaryota</taxon>
        <taxon>Metazoa</taxon>
        <taxon>Ecdysozoa</taxon>
        <taxon>Arthropoda</taxon>
        <taxon>Hexapoda</taxon>
        <taxon>Insecta</taxon>
        <taxon>Pterygota</taxon>
        <taxon>Neoptera</taxon>
        <taxon>Polyneoptera</taxon>
        <taxon>Orthoptera</taxon>
        <taxon>Caelifera</taxon>
        <taxon>Acrididea</taxon>
        <taxon>Acridomorpha</taxon>
        <taxon>Acridoidea</taxon>
        <taxon>Acrididae</taxon>
        <taxon>Oedipodinae</taxon>
        <taxon>Locusta</taxon>
    </lineage>
</organism>
<accession>P61210</accession>
<accession>P35676</accession>
<accession>Q9VNQ2</accession>
<proteinExistence type="evidence at transcript level"/>
<reference key="1">
    <citation type="journal article" date="2000" name="Insect Mol. Biol.">
        <title>A locust type 1 ADP-ribosylation factor (lARF1) is 100% identical in amino acid sequence to Drosophila ARF1 despite obvious DNA sequence divergence.</title>
        <authorList>
            <person name="Hannan F."/>
            <person name="Evans P.D."/>
        </authorList>
    </citation>
    <scope>NUCLEOTIDE SEQUENCE [MRNA]</scope>
</reference>
<sequence>MGNVFANLFKGLFGKKEMRILMVGLDAAGKTTILYKLKLGEIVTTIPTIGFNVETVEYKNISFTVWDVGGQDKIRPLWRHYFQNTQGLIFVVDSNDRERIGEAREELMRMLAEDELRDAVLLIFANKQDLPNAMNAAEITDKLGLHSLRNRNWYIQATCATSGDGLYEGLDWLSNQLKNANR</sequence>
<feature type="initiator methionine" description="Removed" evidence="3">
    <location>
        <position position="1"/>
    </location>
</feature>
<feature type="chain" id="PRO_0000207442" description="ADP-ribosylation factor 1">
    <location>
        <begin position="2"/>
        <end position="182"/>
    </location>
</feature>
<feature type="region of interest" description="Important for the stable binding to the membranes" evidence="2">
    <location>
        <begin position="3"/>
        <end position="16"/>
    </location>
</feature>
<feature type="binding site" evidence="1">
    <location>
        <begin position="24"/>
        <end position="32"/>
    </location>
    <ligand>
        <name>GTP</name>
        <dbReference type="ChEBI" id="CHEBI:37565"/>
    </ligand>
</feature>
<feature type="binding site" evidence="1">
    <location>
        <begin position="126"/>
        <end position="129"/>
    </location>
    <ligand>
        <name>GTP</name>
        <dbReference type="ChEBI" id="CHEBI:37565"/>
    </ligand>
</feature>
<feature type="binding site" evidence="1">
    <location>
        <position position="160"/>
    </location>
    <ligand>
        <name>GTP</name>
        <dbReference type="ChEBI" id="CHEBI:37565"/>
    </ligand>
</feature>
<feature type="lipid moiety-binding region" description="N-myristoyl glycine" evidence="3">
    <location>
        <position position="2"/>
    </location>
</feature>
<gene>
    <name type="primary">ARF1</name>
</gene>
<name>ARF1_LOCMI</name>
<dbReference type="EC" id="3.6.5.2" evidence="1"/>
<dbReference type="EMBL" id="U90609">
    <property type="protein sequence ID" value="AAF21238.1"/>
    <property type="molecule type" value="mRNA"/>
</dbReference>
<dbReference type="SMR" id="P61210"/>
<dbReference type="GO" id="GO:0000139">
    <property type="term" value="C:Golgi membrane"/>
    <property type="evidence" value="ECO:0007669"/>
    <property type="project" value="UniProtKB-SubCell"/>
</dbReference>
<dbReference type="GO" id="GO:0005525">
    <property type="term" value="F:GTP binding"/>
    <property type="evidence" value="ECO:0007669"/>
    <property type="project" value="UniProtKB-KW"/>
</dbReference>
<dbReference type="GO" id="GO:0003924">
    <property type="term" value="F:GTPase activity"/>
    <property type="evidence" value="ECO:0007669"/>
    <property type="project" value="InterPro"/>
</dbReference>
<dbReference type="GO" id="GO:0051649">
    <property type="term" value="P:establishment of localization in cell"/>
    <property type="evidence" value="ECO:0007669"/>
    <property type="project" value="UniProtKB-ARBA"/>
</dbReference>
<dbReference type="GO" id="GO:0015031">
    <property type="term" value="P:protein transport"/>
    <property type="evidence" value="ECO:0007669"/>
    <property type="project" value="UniProtKB-KW"/>
</dbReference>
<dbReference type="GO" id="GO:0016192">
    <property type="term" value="P:vesicle-mediated transport"/>
    <property type="evidence" value="ECO:0007669"/>
    <property type="project" value="UniProtKB-KW"/>
</dbReference>
<dbReference type="CDD" id="cd04150">
    <property type="entry name" value="Arf1_5_like"/>
    <property type="match status" value="1"/>
</dbReference>
<dbReference type="FunFam" id="3.40.50.300:FF:003500">
    <property type="entry name" value="ADP-ribosylation factor 1"/>
    <property type="match status" value="1"/>
</dbReference>
<dbReference type="Gene3D" id="3.40.50.300">
    <property type="entry name" value="P-loop containing nucleotide triphosphate hydrolases"/>
    <property type="match status" value="1"/>
</dbReference>
<dbReference type="InterPro" id="IPR045872">
    <property type="entry name" value="Arf1-5-like"/>
</dbReference>
<dbReference type="InterPro" id="IPR027417">
    <property type="entry name" value="P-loop_NTPase"/>
</dbReference>
<dbReference type="InterPro" id="IPR005225">
    <property type="entry name" value="Small_GTP-bd"/>
</dbReference>
<dbReference type="InterPro" id="IPR024156">
    <property type="entry name" value="Small_GTPase_ARF"/>
</dbReference>
<dbReference type="InterPro" id="IPR006689">
    <property type="entry name" value="Small_GTPase_ARF/SAR"/>
</dbReference>
<dbReference type="NCBIfam" id="TIGR00231">
    <property type="entry name" value="small_GTP"/>
    <property type="match status" value="1"/>
</dbReference>
<dbReference type="PANTHER" id="PTHR11711">
    <property type="entry name" value="ADP RIBOSYLATION FACTOR-RELATED"/>
    <property type="match status" value="1"/>
</dbReference>
<dbReference type="Pfam" id="PF00025">
    <property type="entry name" value="Arf"/>
    <property type="match status" value="1"/>
</dbReference>
<dbReference type="PRINTS" id="PR00328">
    <property type="entry name" value="SAR1GTPBP"/>
</dbReference>
<dbReference type="SMART" id="SM00177">
    <property type="entry name" value="ARF"/>
    <property type="match status" value="1"/>
</dbReference>
<dbReference type="SMART" id="SM00175">
    <property type="entry name" value="RAB"/>
    <property type="match status" value="1"/>
</dbReference>
<dbReference type="SMART" id="SM00178">
    <property type="entry name" value="SAR"/>
    <property type="match status" value="1"/>
</dbReference>
<dbReference type="SUPFAM" id="SSF52540">
    <property type="entry name" value="P-loop containing nucleoside triphosphate hydrolases"/>
    <property type="match status" value="1"/>
</dbReference>
<dbReference type="PROSITE" id="PS51417">
    <property type="entry name" value="ARF"/>
    <property type="match status" value="1"/>
</dbReference>
<protein>
    <recommendedName>
        <fullName>ADP-ribosylation factor 1</fullName>
        <ecNumber evidence="1">3.6.5.2</ecNumber>
    </recommendedName>
    <alternativeName>
        <fullName>lARF1</fullName>
    </alternativeName>
</protein>